<keyword id="KW-1185">Reference proteome</keyword>
<keyword id="KW-0687">Ribonucleoprotein</keyword>
<keyword id="KW-0689">Ribosomal protein</keyword>
<keyword id="KW-0694">RNA-binding</keyword>
<keyword id="KW-0699">rRNA-binding</keyword>
<keyword id="KW-0820">tRNA-binding</keyword>
<evidence type="ECO:0000255" key="1">
    <source>
        <dbReference type="HAMAP-Rule" id="MF_01315"/>
    </source>
</evidence>
<evidence type="ECO:0000256" key="2">
    <source>
        <dbReference type="SAM" id="MobiDB-lite"/>
    </source>
</evidence>
<evidence type="ECO:0000305" key="3"/>
<gene>
    <name evidence="1" type="primary">rpsM</name>
    <name evidence="1" type="synonym">rps13</name>
    <name type="ordered locus">PCC8801_0230</name>
</gene>
<feature type="chain" id="PRO_1000141252" description="Small ribosomal subunit protein uS13">
    <location>
        <begin position="1"/>
        <end position="127"/>
    </location>
</feature>
<feature type="region of interest" description="Disordered" evidence="2">
    <location>
        <begin position="90"/>
        <end position="127"/>
    </location>
</feature>
<feature type="compositionally biased region" description="Basic residues" evidence="2">
    <location>
        <begin position="101"/>
        <end position="127"/>
    </location>
</feature>
<reference key="1">
    <citation type="journal article" date="2011" name="MBio">
        <title>Novel metabolic attributes of the genus Cyanothece, comprising a group of unicellular nitrogen-fixing Cyanobacteria.</title>
        <authorList>
            <person name="Bandyopadhyay A."/>
            <person name="Elvitigala T."/>
            <person name="Welsh E."/>
            <person name="Stockel J."/>
            <person name="Liberton M."/>
            <person name="Min H."/>
            <person name="Sherman L.A."/>
            <person name="Pakrasi H.B."/>
        </authorList>
    </citation>
    <scope>NUCLEOTIDE SEQUENCE [LARGE SCALE GENOMIC DNA]</scope>
    <source>
        <strain>PCC 8801 / RF-1</strain>
    </source>
</reference>
<comment type="function">
    <text evidence="1">Located at the top of the head of the 30S subunit, it contacts several helices of the 16S rRNA. In the 70S ribosome it contacts the 23S rRNA (bridge B1a) and protein L5 of the 50S subunit (bridge B1b), connecting the 2 subunits; these bridges are implicated in subunit movement. Contacts the tRNAs in the A and P-sites.</text>
</comment>
<comment type="subunit">
    <text evidence="1">Part of the 30S ribosomal subunit. Forms a loose heterodimer with protein S19. Forms two bridges to the 50S subunit in the 70S ribosome.</text>
</comment>
<comment type="similarity">
    <text evidence="1">Belongs to the universal ribosomal protein uS13 family.</text>
</comment>
<dbReference type="EMBL" id="CP001287">
    <property type="protein sequence ID" value="ACK64333.1"/>
    <property type="molecule type" value="Genomic_DNA"/>
</dbReference>
<dbReference type="RefSeq" id="WP_012593610.1">
    <property type="nucleotide sequence ID" value="NC_011726.1"/>
</dbReference>
<dbReference type="SMR" id="B7K226"/>
<dbReference type="STRING" id="41431.PCC8801_0230"/>
<dbReference type="KEGG" id="cyp:PCC8801_0230"/>
<dbReference type="eggNOG" id="COG0099">
    <property type="taxonomic scope" value="Bacteria"/>
</dbReference>
<dbReference type="HOGENOM" id="CLU_103849_1_2_3"/>
<dbReference type="OrthoDB" id="9803610at2"/>
<dbReference type="Proteomes" id="UP000008204">
    <property type="component" value="Chromosome"/>
</dbReference>
<dbReference type="GO" id="GO:0005829">
    <property type="term" value="C:cytosol"/>
    <property type="evidence" value="ECO:0007669"/>
    <property type="project" value="TreeGrafter"/>
</dbReference>
<dbReference type="GO" id="GO:0015935">
    <property type="term" value="C:small ribosomal subunit"/>
    <property type="evidence" value="ECO:0007669"/>
    <property type="project" value="TreeGrafter"/>
</dbReference>
<dbReference type="GO" id="GO:0019843">
    <property type="term" value="F:rRNA binding"/>
    <property type="evidence" value="ECO:0007669"/>
    <property type="project" value="UniProtKB-UniRule"/>
</dbReference>
<dbReference type="GO" id="GO:0003735">
    <property type="term" value="F:structural constituent of ribosome"/>
    <property type="evidence" value="ECO:0007669"/>
    <property type="project" value="InterPro"/>
</dbReference>
<dbReference type="GO" id="GO:0000049">
    <property type="term" value="F:tRNA binding"/>
    <property type="evidence" value="ECO:0007669"/>
    <property type="project" value="UniProtKB-UniRule"/>
</dbReference>
<dbReference type="GO" id="GO:0006412">
    <property type="term" value="P:translation"/>
    <property type="evidence" value="ECO:0007669"/>
    <property type="project" value="UniProtKB-UniRule"/>
</dbReference>
<dbReference type="FunFam" id="1.10.8.50:FF:000001">
    <property type="entry name" value="30S ribosomal protein S13"/>
    <property type="match status" value="1"/>
</dbReference>
<dbReference type="FunFam" id="4.10.910.10:FF:000001">
    <property type="entry name" value="30S ribosomal protein S13"/>
    <property type="match status" value="1"/>
</dbReference>
<dbReference type="Gene3D" id="1.10.8.50">
    <property type="match status" value="1"/>
</dbReference>
<dbReference type="Gene3D" id="4.10.910.10">
    <property type="entry name" value="30s ribosomal protein s13, domain 2"/>
    <property type="match status" value="1"/>
</dbReference>
<dbReference type="HAMAP" id="MF_01315">
    <property type="entry name" value="Ribosomal_uS13"/>
    <property type="match status" value="1"/>
</dbReference>
<dbReference type="InterPro" id="IPR027437">
    <property type="entry name" value="Rbsml_uS13_C"/>
</dbReference>
<dbReference type="InterPro" id="IPR001892">
    <property type="entry name" value="Ribosomal_uS13"/>
</dbReference>
<dbReference type="InterPro" id="IPR010979">
    <property type="entry name" value="Ribosomal_uS13-like_H2TH"/>
</dbReference>
<dbReference type="InterPro" id="IPR019980">
    <property type="entry name" value="Ribosomal_uS13_bac-type"/>
</dbReference>
<dbReference type="InterPro" id="IPR018269">
    <property type="entry name" value="Ribosomal_uS13_CS"/>
</dbReference>
<dbReference type="NCBIfam" id="TIGR03631">
    <property type="entry name" value="uS13_bact"/>
    <property type="match status" value="1"/>
</dbReference>
<dbReference type="PANTHER" id="PTHR10871">
    <property type="entry name" value="30S RIBOSOMAL PROTEIN S13/40S RIBOSOMAL PROTEIN S18"/>
    <property type="match status" value="1"/>
</dbReference>
<dbReference type="PANTHER" id="PTHR10871:SF1">
    <property type="entry name" value="SMALL RIBOSOMAL SUBUNIT PROTEIN US13M"/>
    <property type="match status" value="1"/>
</dbReference>
<dbReference type="Pfam" id="PF00416">
    <property type="entry name" value="Ribosomal_S13"/>
    <property type="match status" value="1"/>
</dbReference>
<dbReference type="PIRSF" id="PIRSF002134">
    <property type="entry name" value="Ribosomal_S13"/>
    <property type="match status" value="1"/>
</dbReference>
<dbReference type="SUPFAM" id="SSF46946">
    <property type="entry name" value="S13-like H2TH domain"/>
    <property type="match status" value="1"/>
</dbReference>
<dbReference type="PROSITE" id="PS00646">
    <property type="entry name" value="RIBOSOMAL_S13_1"/>
    <property type="match status" value="1"/>
</dbReference>
<dbReference type="PROSITE" id="PS50159">
    <property type="entry name" value="RIBOSOMAL_S13_2"/>
    <property type="match status" value="1"/>
</dbReference>
<sequence>MARIAGVDLPRDKRVEIGLTYLFGIGLSRSQEILAETGVNPDTRVRDLTDEEVANLRAYIETNYQIEGDLRRWEAMNIKRLADIGTYRGRRHRQGLPVRGQRTRTNARTRRGRRVTVAGKKKAPSKK</sequence>
<name>RS13_RIPO1</name>
<accession>B7K226</accession>
<protein>
    <recommendedName>
        <fullName evidence="1">Small ribosomal subunit protein uS13</fullName>
    </recommendedName>
    <alternativeName>
        <fullName evidence="3">30S ribosomal protein S13</fullName>
    </alternativeName>
</protein>
<organism>
    <name type="scientific">Rippkaea orientalis (strain PCC 8801 / RF-1)</name>
    <name type="common">Cyanothece sp. (strain PCC 8801)</name>
    <dbReference type="NCBI Taxonomy" id="41431"/>
    <lineage>
        <taxon>Bacteria</taxon>
        <taxon>Bacillati</taxon>
        <taxon>Cyanobacteriota</taxon>
        <taxon>Cyanophyceae</taxon>
        <taxon>Oscillatoriophycideae</taxon>
        <taxon>Chroococcales</taxon>
        <taxon>Aphanothecaceae</taxon>
        <taxon>Rippkaea</taxon>
        <taxon>Rippkaea orientalis</taxon>
    </lineage>
</organism>
<proteinExistence type="inferred from homology"/>